<comment type="function">
    <text>Regulator of the spore photoproduct lyase operon (splAB).</text>
</comment>
<comment type="sequence caution" evidence="1">
    <conflict type="erroneous initiation">
        <sequence resource="EMBL-CDS" id="AAB52375"/>
    </conflict>
</comment>
<gene>
    <name type="primary">splA</name>
    <name type="synonym">ykxI</name>
    <name type="ordered locus">BSU13920</name>
</gene>
<feature type="chain" id="PRO_0000072128" description="Transcriptional regulator SplA">
    <location>
        <begin position="1"/>
        <end position="79"/>
    </location>
</feature>
<feature type="sequence conflict" description="In Ref. 3; AAB52375." evidence="1" ref="3">
    <original>S</original>
    <variation>A</variation>
    <location>
        <position position="67"/>
    </location>
</feature>
<protein>
    <recommendedName>
        <fullName>Transcriptional regulator SplA</fullName>
    </recommendedName>
</protein>
<sequence>MSNQFNAGDTVYVIYRNPHAANVAHIKEAEIVHHPYHEGELSLFIYETYHPFAEDDAVFASYEEAKSLYKELFDIDPYE</sequence>
<proteinExistence type="predicted"/>
<reference key="1">
    <citation type="journal article" date="1993" name="J. Bacteriol.">
        <title>Molecular cloning and characterization of the Bacillus subtilis spore photoproduct lyase (spl) gene, which is involved in repair of UV radiation-induced DNA damage during spore germination.</title>
        <authorList>
            <person name="Fajardo-Cavazos P."/>
            <person name="Salazar C."/>
            <person name="Nicholson W.L."/>
        </authorList>
    </citation>
    <scope>NUCLEOTIDE SEQUENCE [GENOMIC DNA]</scope>
    <source>
        <strain>168</strain>
    </source>
</reference>
<reference key="2">
    <citation type="journal article" date="1997" name="Nature">
        <title>The complete genome sequence of the Gram-positive bacterium Bacillus subtilis.</title>
        <authorList>
            <person name="Kunst F."/>
            <person name="Ogasawara N."/>
            <person name="Moszer I."/>
            <person name="Albertini A.M."/>
            <person name="Alloni G."/>
            <person name="Azevedo V."/>
            <person name="Bertero M.G."/>
            <person name="Bessieres P."/>
            <person name="Bolotin A."/>
            <person name="Borchert S."/>
            <person name="Borriss R."/>
            <person name="Boursier L."/>
            <person name="Brans A."/>
            <person name="Braun M."/>
            <person name="Brignell S.C."/>
            <person name="Bron S."/>
            <person name="Brouillet S."/>
            <person name="Bruschi C.V."/>
            <person name="Caldwell B."/>
            <person name="Capuano V."/>
            <person name="Carter N.M."/>
            <person name="Choi S.-K."/>
            <person name="Codani J.-J."/>
            <person name="Connerton I.F."/>
            <person name="Cummings N.J."/>
            <person name="Daniel R.A."/>
            <person name="Denizot F."/>
            <person name="Devine K.M."/>
            <person name="Duesterhoeft A."/>
            <person name="Ehrlich S.D."/>
            <person name="Emmerson P.T."/>
            <person name="Entian K.-D."/>
            <person name="Errington J."/>
            <person name="Fabret C."/>
            <person name="Ferrari E."/>
            <person name="Foulger D."/>
            <person name="Fritz C."/>
            <person name="Fujita M."/>
            <person name="Fujita Y."/>
            <person name="Fuma S."/>
            <person name="Galizzi A."/>
            <person name="Galleron N."/>
            <person name="Ghim S.-Y."/>
            <person name="Glaser P."/>
            <person name="Goffeau A."/>
            <person name="Golightly E.J."/>
            <person name="Grandi G."/>
            <person name="Guiseppi G."/>
            <person name="Guy B.J."/>
            <person name="Haga K."/>
            <person name="Haiech J."/>
            <person name="Harwood C.R."/>
            <person name="Henaut A."/>
            <person name="Hilbert H."/>
            <person name="Holsappel S."/>
            <person name="Hosono S."/>
            <person name="Hullo M.-F."/>
            <person name="Itaya M."/>
            <person name="Jones L.-M."/>
            <person name="Joris B."/>
            <person name="Karamata D."/>
            <person name="Kasahara Y."/>
            <person name="Klaerr-Blanchard M."/>
            <person name="Klein C."/>
            <person name="Kobayashi Y."/>
            <person name="Koetter P."/>
            <person name="Koningstein G."/>
            <person name="Krogh S."/>
            <person name="Kumano M."/>
            <person name="Kurita K."/>
            <person name="Lapidus A."/>
            <person name="Lardinois S."/>
            <person name="Lauber J."/>
            <person name="Lazarevic V."/>
            <person name="Lee S.-M."/>
            <person name="Levine A."/>
            <person name="Liu H."/>
            <person name="Masuda S."/>
            <person name="Mauel C."/>
            <person name="Medigue C."/>
            <person name="Medina N."/>
            <person name="Mellado R.P."/>
            <person name="Mizuno M."/>
            <person name="Moestl D."/>
            <person name="Nakai S."/>
            <person name="Noback M."/>
            <person name="Noone D."/>
            <person name="O'Reilly M."/>
            <person name="Ogawa K."/>
            <person name="Ogiwara A."/>
            <person name="Oudega B."/>
            <person name="Park S.-H."/>
            <person name="Parro V."/>
            <person name="Pohl T.M."/>
            <person name="Portetelle D."/>
            <person name="Porwollik S."/>
            <person name="Prescott A.M."/>
            <person name="Presecan E."/>
            <person name="Pujic P."/>
            <person name="Purnelle B."/>
            <person name="Rapoport G."/>
            <person name="Rey M."/>
            <person name="Reynolds S."/>
            <person name="Rieger M."/>
            <person name="Rivolta C."/>
            <person name="Rocha E."/>
            <person name="Roche B."/>
            <person name="Rose M."/>
            <person name="Sadaie Y."/>
            <person name="Sato T."/>
            <person name="Scanlan E."/>
            <person name="Schleich S."/>
            <person name="Schroeter R."/>
            <person name="Scoffone F."/>
            <person name="Sekiguchi J."/>
            <person name="Sekowska A."/>
            <person name="Seror S.J."/>
            <person name="Serror P."/>
            <person name="Shin B.-S."/>
            <person name="Soldo B."/>
            <person name="Sorokin A."/>
            <person name="Tacconi E."/>
            <person name="Takagi T."/>
            <person name="Takahashi H."/>
            <person name="Takemaru K."/>
            <person name="Takeuchi M."/>
            <person name="Tamakoshi A."/>
            <person name="Tanaka T."/>
            <person name="Terpstra P."/>
            <person name="Tognoni A."/>
            <person name="Tosato V."/>
            <person name="Uchiyama S."/>
            <person name="Vandenbol M."/>
            <person name="Vannier F."/>
            <person name="Vassarotti A."/>
            <person name="Viari A."/>
            <person name="Wambutt R."/>
            <person name="Wedler E."/>
            <person name="Wedler H."/>
            <person name="Weitzenegger T."/>
            <person name="Winters P."/>
            <person name="Wipat A."/>
            <person name="Yamamoto H."/>
            <person name="Yamane K."/>
            <person name="Yasumoto K."/>
            <person name="Yata K."/>
            <person name="Yoshida K."/>
            <person name="Yoshikawa H.-F."/>
            <person name="Zumstein E."/>
            <person name="Yoshikawa H."/>
            <person name="Danchin A."/>
        </authorList>
    </citation>
    <scope>NUCLEOTIDE SEQUENCE [LARGE SCALE GENOMIC DNA]</scope>
    <source>
        <strain>168</strain>
    </source>
</reference>
<reference key="3">
    <citation type="journal article" date="1993" name="Protein Sci.">
        <title>Sequence analyses and evolutionary relationships among the energy-coupling proteins Enzyme I and HPr of the bacterial phosphoenolpyruvate: sugar phosphotransferase system.</title>
        <authorList>
            <person name="Reizer J."/>
            <person name="Hoischen C."/>
            <person name="Reizer A."/>
            <person name="Pham T.N."/>
            <person name="Saier M.H. Jr."/>
        </authorList>
    </citation>
    <scope>NUCLEOTIDE SEQUENCE [GENOMIC DNA] OF 1-76</scope>
</reference>
<name>SPLA_BACSU</name>
<accession>P37955</accession>
<accession>Q45655</accession>
<dbReference type="EMBL" id="L08809">
    <property type="protein sequence ID" value="AAA22415.1"/>
    <property type="molecule type" value="Genomic_DNA"/>
</dbReference>
<dbReference type="EMBL" id="AL009126">
    <property type="protein sequence ID" value="CAB13265.1"/>
    <property type="molecule type" value="Genomic_DNA"/>
</dbReference>
<dbReference type="EMBL" id="M98359">
    <property type="protein sequence ID" value="AAB52375.1"/>
    <property type="status" value="ALT_INIT"/>
    <property type="molecule type" value="Genomic_DNA"/>
</dbReference>
<dbReference type="PIR" id="E69709">
    <property type="entry name" value="E69709"/>
</dbReference>
<dbReference type="RefSeq" id="NP_389275.1">
    <property type="nucleotide sequence ID" value="NC_000964.3"/>
</dbReference>
<dbReference type="RefSeq" id="WP_003218644.1">
    <property type="nucleotide sequence ID" value="NZ_OZ025638.1"/>
</dbReference>
<dbReference type="FunCoup" id="P37955">
    <property type="interactions" value="46"/>
</dbReference>
<dbReference type="STRING" id="224308.BSU13920"/>
<dbReference type="PaxDb" id="224308-BSU13920"/>
<dbReference type="EnsemblBacteria" id="CAB13265">
    <property type="protein sequence ID" value="CAB13265"/>
    <property type="gene ID" value="BSU_13920"/>
</dbReference>
<dbReference type="GeneID" id="86874103"/>
<dbReference type="GeneID" id="939728"/>
<dbReference type="KEGG" id="bsu:BSU13920"/>
<dbReference type="PATRIC" id="fig|224308.179.peg.1518"/>
<dbReference type="eggNOG" id="ENOG5033N73">
    <property type="taxonomic scope" value="Bacteria"/>
</dbReference>
<dbReference type="InParanoid" id="P37955"/>
<dbReference type="OrthoDB" id="2970581at2"/>
<dbReference type="BioCyc" id="BSUB:BSU13920-MONOMER"/>
<dbReference type="PRO" id="PR:P37955"/>
<dbReference type="Proteomes" id="UP000001570">
    <property type="component" value="Chromosome"/>
</dbReference>
<dbReference type="InterPro" id="IPR022608">
    <property type="entry name" value="Tscrpt_reg_SplA"/>
</dbReference>
<dbReference type="Pfam" id="PF11132">
    <property type="entry name" value="SplA"/>
    <property type="match status" value="1"/>
</dbReference>
<keyword id="KW-1185">Reference proteome</keyword>
<keyword id="KW-0804">Transcription</keyword>
<keyword id="KW-0805">Transcription regulation</keyword>
<evidence type="ECO:0000305" key="1"/>
<organism>
    <name type="scientific">Bacillus subtilis (strain 168)</name>
    <dbReference type="NCBI Taxonomy" id="224308"/>
    <lineage>
        <taxon>Bacteria</taxon>
        <taxon>Bacillati</taxon>
        <taxon>Bacillota</taxon>
        <taxon>Bacilli</taxon>
        <taxon>Bacillales</taxon>
        <taxon>Bacillaceae</taxon>
        <taxon>Bacillus</taxon>
    </lineage>
</organism>